<proteinExistence type="evidence at protein level"/>
<organism>
    <name type="scientific">Rattus norvegicus</name>
    <name type="common">Rat</name>
    <dbReference type="NCBI Taxonomy" id="10116"/>
    <lineage>
        <taxon>Eukaryota</taxon>
        <taxon>Metazoa</taxon>
        <taxon>Chordata</taxon>
        <taxon>Craniata</taxon>
        <taxon>Vertebrata</taxon>
        <taxon>Euteleostomi</taxon>
        <taxon>Mammalia</taxon>
        <taxon>Eutheria</taxon>
        <taxon>Euarchontoglires</taxon>
        <taxon>Glires</taxon>
        <taxon>Rodentia</taxon>
        <taxon>Myomorpha</taxon>
        <taxon>Muroidea</taxon>
        <taxon>Muridae</taxon>
        <taxon>Murinae</taxon>
        <taxon>Rattus</taxon>
    </lineage>
</organism>
<dbReference type="EC" id="2.4.1.17" evidence="3"/>
<dbReference type="EMBL" id="M13506">
    <property type="protein sequence ID" value="AAA42313.1"/>
    <property type="molecule type" value="mRNA"/>
</dbReference>
<dbReference type="EMBL" id="M35086">
    <property type="protein sequence ID" value="AAA42310.1"/>
    <property type="molecule type" value="Genomic_DNA"/>
</dbReference>
<dbReference type="EMBL" id="M35202">
    <property type="protein sequence ID" value="AAA42310.1"/>
    <property type="status" value="JOINED"/>
    <property type="molecule type" value="Genomic_DNA"/>
</dbReference>
<dbReference type="EMBL" id="M35080">
    <property type="protein sequence ID" value="AAA42310.1"/>
    <property type="status" value="JOINED"/>
    <property type="molecule type" value="Genomic_DNA"/>
</dbReference>
<dbReference type="EMBL" id="M35082">
    <property type="protein sequence ID" value="AAA42310.1"/>
    <property type="status" value="JOINED"/>
    <property type="molecule type" value="Genomic_DNA"/>
</dbReference>
<dbReference type="EMBL" id="M35083">
    <property type="protein sequence ID" value="AAA42310.1"/>
    <property type="status" value="JOINED"/>
    <property type="molecule type" value="Genomic_DNA"/>
</dbReference>
<dbReference type="PIR" id="A42233">
    <property type="entry name" value="A42233"/>
</dbReference>
<dbReference type="RefSeq" id="NP_775417.1">
    <property type="nucleotide sequence ID" value="NM_173295.2"/>
</dbReference>
<dbReference type="SMR" id="P09875"/>
<dbReference type="FunCoup" id="P09875">
    <property type="interactions" value="346"/>
</dbReference>
<dbReference type="IntAct" id="P09875">
    <property type="interactions" value="5"/>
</dbReference>
<dbReference type="STRING" id="10116.ENSRNOP00000002724"/>
<dbReference type="SwissLipids" id="SLP:000001699"/>
<dbReference type="CAZy" id="GT1">
    <property type="family name" value="Glycosyltransferase Family 1"/>
</dbReference>
<dbReference type="GlyCosmos" id="P09875">
    <property type="glycosylation" value="2 sites, No reported glycans"/>
</dbReference>
<dbReference type="GlyGen" id="P09875">
    <property type="glycosylation" value="2 sites"/>
</dbReference>
<dbReference type="iPTMnet" id="P09875"/>
<dbReference type="PhosphoSitePlus" id="P09875"/>
<dbReference type="PaxDb" id="10116-ENSRNOP00000002724"/>
<dbReference type="Ensembl" id="ENSRNOT00000002724.4">
    <property type="protein sequence ID" value="ENSRNOP00000002724.2"/>
    <property type="gene ID" value="ENSRNOG00000001990.5"/>
</dbReference>
<dbReference type="GeneID" id="286954"/>
<dbReference type="KEGG" id="rno:286954"/>
<dbReference type="UCSC" id="RGD:708541">
    <property type="organism name" value="rat"/>
</dbReference>
<dbReference type="AGR" id="RGD:708541"/>
<dbReference type="CTD" id="71773"/>
<dbReference type="RGD" id="708541">
    <property type="gene designation" value="Ugt2b1"/>
</dbReference>
<dbReference type="eggNOG" id="KOG1192">
    <property type="taxonomic scope" value="Eukaryota"/>
</dbReference>
<dbReference type="GeneTree" id="ENSGT00940000153212"/>
<dbReference type="InParanoid" id="P09875"/>
<dbReference type="OMA" id="EFSDQMT"/>
<dbReference type="OrthoDB" id="5835829at2759"/>
<dbReference type="PhylomeDB" id="P09875"/>
<dbReference type="TreeFam" id="TF315472"/>
<dbReference type="BRENDA" id="2.4.1.17">
    <property type="organism ID" value="5301"/>
</dbReference>
<dbReference type="Reactome" id="R-RNO-156588">
    <property type="pathway name" value="Glucuronidation"/>
</dbReference>
<dbReference type="Reactome" id="R-RNO-9749641">
    <property type="pathway name" value="Aspirin ADME"/>
</dbReference>
<dbReference type="Reactome" id="R-RNO-9753281">
    <property type="pathway name" value="Paracetamol ADME"/>
</dbReference>
<dbReference type="Reactome" id="R-RNO-9757110">
    <property type="pathway name" value="Prednisone ADME"/>
</dbReference>
<dbReference type="SABIO-RK" id="P09875"/>
<dbReference type="PRO" id="PR:P09875"/>
<dbReference type="Proteomes" id="UP000002494">
    <property type="component" value="Chromosome 14"/>
</dbReference>
<dbReference type="Bgee" id="ENSRNOG00000001990">
    <property type="expression patterns" value="Expressed in duodenum and 11 other cell types or tissues"/>
</dbReference>
<dbReference type="ExpressionAtlas" id="P09875">
    <property type="expression patterns" value="baseline and differential"/>
</dbReference>
<dbReference type="GO" id="GO:0005789">
    <property type="term" value="C:endoplasmic reticulum membrane"/>
    <property type="evidence" value="ECO:0007669"/>
    <property type="project" value="UniProtKB-SubCell"/>
</dbReference>
<dbReference type="GO" id="GO:0015020">
    <property type="term" value="F:glucuronosyltransferase activity"/>
    <property type="evidence" value="ECO:0000314"/>
    <property type="project" value="UniProtKB"/>
</dbReference>
<dbReference type="GO" id="GO:0070980">
    <property type="term" value="P:biphenyl catabolic process"/>
    <property type="evidence" value="ECO:0000314"/>
    <property type="project" value="RGD"/>
</dbReference>
<dbReference type="GO" id="GO:0071361">
    <property type="term" value="P:cellular response to ethanol"/>
    <property type="evidence" value="ECO:0000270"/>
    <property type="project" value="RGD"/>
</dbReference>
<dbReference type="GO" id="GO:0071385">
    <property type="term" value="P:cellular response to glucocorticoid stimulus"/>
    <property type="evidence" value="ECO:0000270"/>
    <property type="project" value="RGD"/>
</dbReference>
<dbReference type="GO" id="GO:0071378">
    <property type="term" value="P:cellular response to growth hormone stimulus"/>
    <property type="evidence" value="ECO:0000270"/>
    <property type="project" value="RGD"/>
</dbReference>
<dbReference type="GO" id="GO:0071394">
    <property type="term" value="P:cellular response to testosterone stimulus"/>
    <property type="evidence" value="ECO:0000270"/>
    <property type="project" value="RGD"/>
</dbReference>
<dbReference type="GO" id="GO:0008210">
    <property type="term" value="P:estrogen metabolic process"/>
    <property type="evidence" value="ECO:0000314"/>
    <property type="project" value="UniProtKB"/>
</dbReference>
<dbReference type="GO" id="GO:0032496">
    <property type="term" value="P:response to lipopolysaccharide"/>
    <property type="evidence" value="ECO:0000270"/>
    <property type="project" value="RGD"/>
</dbReference>
<dbReference type="GO" id="GO:0006805">
    <property type="term" value="P:xenobiotic metabolic process"/>
    <property type="evidence" value="ECO:0000304"/>
    <property type="project" value="RGD"/>
</dbReference>
<dbReference type="CDD" id="cd03784">
    <property type="entry name" value="GT1_Gtf-like"/>
    <property type="match status" value="1"/>
</dbReference>
<dbReference type="FunFam" id="3.40.50.2000:FF:000001">
    <property type="entry name" value="UDP-glucuronosyltransferase"/>
    <property type="match status" value="1"/>
</dbReference>
<dbReference type="FunFam" id="3.40.50.2000:FF:000081">
    <property type="entry name" value="UDP-glucuronosyltransferase 2A2"/>
    <property type="match status" value="1"/>
</dbReference>
<dbReference type="Gene3D" id="3.40.50.2000">
    <property type="entry name" value="Glycogen Phosphorylase B"/>
    <property type="match status" value="2"/>
</dbReference>
<dbReference type="InterPro" id="IPR050271">
    <property type="entry name" value="UDP-glycosyltransferase"/>
</dbReference>
<dbReference type="InterPro" id="IPR002213">
    <property type="entry name" value="UDP_glucos_trans"/>
</dbReference>
<dbReference type="InterPro" id="IPR035595">
    <property type="entry name" value="UDP_glycos_trans_CS"/>
</dbReference>
<dbReference type="PANTHER" id="PTHR48043">
    <property type="entry name" value="EG:EG0003.4 PROTEIN-RELATED"/>
    <property type="match status" value="1"/>
</dbReference>
<dbReference type="PANTHER" id="PTHR48043:SF12">
    <property type="entry name" value="UDP-GLUCURONOSYLTRANSFERASE 2B4"/>
    <property type="match status" value="1"/>
</dbReference>
<dbReference type="Pfam" id="PF00201">
    <property type="entry name" value="UDPGT"/>
    <property type="match status" value="1"/>
</dbReference>
<dbReference type="SUPFAM" id="SSF53756">
    <property type="entry name" value="UDP-Glycosyltransferase/glycogen phosphorylase"/>
    <property type="match status" value="1"/>
</dbReference>
<dbReference type="PROSITE" id="PS00375">
    <property type="entry name" value="UDPGT"/>
    <property type="match status" value="1"/>
</dbReference>
<sequence>MSMKQTSVFLLIQLICYFRPGACGKVLVWPTEYSHWINIKIILNELAQRGHEVTVLVSSASILIEPTKESSINFEIYSVPLSKSDLEYSFAKWIDEWTRDFETLSIWTYYSKMQKVFNEYSDVVENLCKALIWNKSLMKKLQGSQFDVILADAVGPCGELLAELLKTPLVYSLRFCPGYRCEKFSGGLPLPPSYVPVVLSELSDRMTFVERVKNMLQMLYFDFWFQPFKEKSWSQFYSDVLGRPTTLTEMMGKADIWLIRTFWDLEFPHPFLPNFDFVGGLHCKPAKPLPREMEEFVQSSGEHGVVVFSLGSMVKNLTEEKANVVASALAQIPQKVVWRFDGKKPDTLGSNTRLYKWIPQNDLLGHPKTKAFVAHGGTNGIYEAIYHGIPIVGIPLFADQPDNINHMVAKGAAVRVDFSILSTTGLLTALKIVMNDPSYKENAMRLSRIHHDQPVKPLDRAVFWIEYVMRHKGAKHLRSTLHDLSWFQYHSLDVIGFLLLCVVGVVFIITKFCLFCCRKTANMGKKKKE</sequence>
<keyword id="KW-0256">Endoplasmic reticulum</keyword>
<keyword id="KW-0325">Glycoprotein</keyword>
<keyword id="KW-0328">Glycosyltransferase</keyword>
<keyword id="KW-0472">Membrane</keyword>
<keyword id="KW-1185">Reference proteome</keyword>
<keyword id="KW-0732">Signal</keyword>
<keyword id="KW-0808">Transferase</keyword>
<keyword id="KW-0812">Transmembrane</keyword>
<keyword id="KW-1133">Transmembrane helix</keyword>
<name>UD2B1_RAT</name>
<evidence type="ECO:0000250" key="1"/>
<evidence type="ECO:0000255" key="2"/>
<evidence type="ECO:0000269" key="3">
    <source>
    </source>
</evidence>
<evidence type="ECO:0000303" key="4">
    <source>
    </source>
</evidence>
<evidence type="ECO:0000305" key="5"/>
<evidence type="ECO:0000305" key="6">
    <source>
    </source>
</evidence>
<evidence type="ECO:0000305" key="7">
    <source>
    </source>
</evidence>
<evidence type="ECO:0000312" key="8">
    <source>
        <dbReference type="RGD" id="708541"/>
    </source>
</evidence>
<comment type="function">
    <text evidence="3">UDP-glucuronosyltransferase (UGT) that catalyzes phase II biotransformation reactions in which lipophilic substrates are conjugated with glucuronic acid to increase the metabolite's water solubility, thereby facilitating excretion into either the urine or bile (PubMed:18719240). Essential for the elimination and detoxification of drugs, xenobiotics and endogenous compounds (PubMed:18719240). Catalyzes the glucuronidation of the endogenous estrogen hormone estradiol (PubMed:18719240).</text>
</comment>
<comment type="catalytic activity">
    <reaction evidence="3">
        <text>glucuronate acceptor + UDP-alpha-D-glucuronate = acceptor beta-D-glucuronoside + UDP + H(+)</text>
        <dbReference type="Rhea" id="RHEA:21032"/>
        <dbReference type="ChEBI" id="CHEBI:15378"/>
        <dbReference type="ChEBI" id="CHEBI:58052"/>
        <dbReference type="ChEBI" id="CHEBI:58223"/>
        <dbReference type="ChEBI" id="CHEBI:132367"/>
        <dbReference type="ChEBI" id="CHEBI:132368"/>
        <dbReference type="EC" id="2.4.1.17"/>
    </reaction>
    <physiologicalReaction direction="left-to-right" evidence="6">
        <dbReference type="Rhea" id="RHEA:21033"/>
    </physiologicalReaction>
</comment>
<comment type="catalytic activity">
    <reaction evidence="3">
        <text>17beta-estradiol + UDP-alpha-D-glucuronate = 17beta-estradiol 17-O-(beta-D-glucuronate) + UDP + H(+)</text>
        <dbReference type="Rhea" id="RHEA:52464"/>
        <dbReference type="ChEBI" id="CHEBI:15378"/>
        <dbReference type="ChEBI" id="CHEBI:16469"/>
        <dbReference type="ChEBI" id="CHEBI:58052"/>
        <dbReference type="ChEBI" id="CHEBI:58223"/>
        <dbReference type="ChEBI" id="CHEBI:82961"/>
    </reaction>
    <physiologicalReaction direction="left-to-right" evidence="6">
        <dbReference type="Rhea" id="RHEA:52465"/>
    </physiologicalReaction>
</comment>
<comment type="biophysicochemical properties">
    <kinetics>
        <KM evidence="3">13.4 uM for 17beta-estradiol/estradiol (when assaying glucuronidation at position 17)</KM>
        <Vmax evidence="3">1630.0 pmol/min/mg enzyme for the formation of 17beta-estradiol 17-O-(beta-D-glucuronate)</Vmax>
        <Vmax evidence="3">55.0 pmol/min/mg enzyme for the formation of 17beta-estradiol 3-O-(beta-D-glucuronate)</Vmax>
    </kinetics>
</comment>
<comment type="subcellular location">
    <subcellularLocation>
        <location evidence="7">Endoplasmic reticulum membrane</location>
        <topology evidence="2">Single-pass membrane protein</topology>
    </subcellularLocation>
</comment>
<comment type="induction">
    <text evidence="5">By phenobarbital.</text>
</comment>
<comment type="similarity">
    <text evidence="5">Belongs to the UDP-glycosyltransferase family.</text>
</comment>
<protein>
    <recommendedName>
        <fullName evidence="4">UDP-glucuronosyltransferase 2B1</fullName>
        <shortName>UDPGT 2B1</shortName>
        <shortName>UGT2B1</shortName>
        <ecNumber evidence="3">2.4.1.17</ecNumber>
    </recommendedName>
    <alternativeName>
        <fullName>UDPGTr-2</fullName>
    </alternativeName>
</protein>
<feature type="signal peptide" evidence="1">
    <location>
        <begin position="1"/>
        <end position="23"/>
    </location>
</feature>
<feature type="chain" id="PRO_0000036025" description="UDP-glucuronosyltransferase 2B1">
    <location>
        <begin position="24"/>
        <end position="529"/>
    </location>
</feature>
<feature type="transmembrane region" description="Helical" evidence="2">
    <location>
        <begin position="494"/>
        <end position="510"/>
    </location>
</feature>
<feature type="glycosylation site" description="N-linked (GlcNAc...) asparagine" evidence="2">
    <location>
        <position position="134"/>
    </location>
</feature>
<feature type="glycosylation site" description="N-linked (GlcNAc...) asparagine" evidence="2">
    <location>
        <position position="316"/>
    </location>
</feature>
<accession>P09875</accession>
<gene>
    <name evidence="8" type="primary">Ugt2b1</name>
    <name type="synonym">Udpgtr2</name>
</gene>
<reference key="1">
    <citation type="journal article" date="1986" name="J. Biol. Chem.">
        <title>Rat liver UDP-glucuronosyltransferase. Sequence and expression of a cDNA encoding a phenobarbital-inducible form.</title>
        <authorList>
            <person name="McKenzie P.I."/>
        </authorList>
    </citation>
    <scope>NUCLEOTIDE SEQUENCE [MRNA]</scope>
    <scope>SUBCELLULAR LOCATION</scope>
    <source>
        <tissue>Liver</tissue>
    </source>
</reference>
<reference key="2">
    <citation type="journal article" date="1990" name="J. Biol. Chem.">
        <title>Organization of the rat UDP-glucuronosyltransferase, UDPGTr-2, gene and characterization of its promoter.</title>
        <authorList>
            <person name="McKenzie P.I."/>
            <person name="Rodbourn L."/>
        </authorList>
    </citation>
    <scope>NUCLEOTIDE SEQUENCE [GENOMIC DNA]</scope>
</reference>
<reference key="3">
    <citation type="journal article" date="2008" name="Drug Metab. Dispos.">
        <title>The configuration of the 17-hydroxy group variably influences the glucuronidation of beta-estradiol and epiestradiol by human UDP-glucuronosyltransferases.</title>
        <authorList>
            <person name="Itaeaho K."/>
            <person name="Mackenzie P.I."/>
            <person name="Ikushiro S."/>
            <person name="Miners J.O."/>
            <person name="Finel M."/>
        </authorList>
    </citation>
    <scope>FUNCTION</scope>
    <scope>CATALYTIC ACTIVITY</scope>
    <scope>BIOPHYSICOCHEMICAL PROPERTIES</scope>
</reference>